<proteinExistence type="inferred from homology"/>
<reference key="1">
    <citation type="submission" date="2007-12" db="EMBL/GenBank/DDBJ databases">
        <title>Complete sequence of Methylobacterium extorquens PA1.</title>
        <authorList>
            <consortium name="US DOE Joint Genome Institute"/>
            <person name="Copeland A."/>
            <person name="Lucas S."/>
            <person name="Lapidus A."/>
            <person name="Barry K."/>
            <person name="Glavina del Rio T."/>
            <person name="Dalin E."/>
            <person name="Tice H."/>
            <person name="Pitluck S."/>
            <person name="Saunders E."/>
            <person name="Brettin T."/>
            <person name="Bruce D."/>
            <person name="Detter J.C."/>
            <person name="Han C."/>
            <person name="Schmutz J."/>
            <person name="Larimer F."/>
            <person name="Land M."/>
            <person name="Hauser L."/>
            <person name="Kyrpides N."/>
            <person name="Kim E."/>
            <person name="Marx C."/>
            <person name="Richardson P."/>
        </authorList>
    </citation>
    <scope>NUCLEOTIDE SEQUENCE [LARGE SCALE GENOMIC DNA]</scope>
    <source>
        <strain>PA1</strain>
    </source>
</reference>
<keyword id="KW-0963">Cytoplasm</keyword>
<keyword id="KW-0342">GTP-binding</keyword>
<keyword id="KW-0378">Hydrolase</keyword>
<keyword id="KW-0460">Magnesium</keyword>
<keyword id="KW-0479">Metal-binding</keyword>
<keyword id="KW-0547">Nucleotide-binding</keyword>
<feature type="chain" id="PRO_0000386040" description="GTPase Obg">
    <location>
        <begin position="1"/>
        <end position="344"/>
    </location>
</feature>
<feature type="domain" description="Obg" evidence="2">
    <location>
        <begin position="1"/>
        <end position="159"/>
    </location>
</feature>
<feature type="domain" description="OBG-type G" evidence="1">
    <location>
        <begin position="160"/>
        <end position="327"/>
    </location>
</feature>
<feature type="binding site" evidence="1">
    <location>
        <begin position="166"/>
        <end position="173"/>
    </location>
    <ligand>
        <name>GTP</name>
        <dbReference type="ChEBI" id="CHEBI:37565"/>
    </ligand>
</feature>
<feature type="binding site" evidence="1">
    <location>
        <position position="173"/>
    </location>
    <ligand>
        <name>Mg(2+)</name>
        <dbReference type="ChEBI" id="CHEBI:18420"/>
    </ligand>
</feature>
<feature type="binding site" evidence="1">
    <location>
        <begin position="191"/>
        <end position="195"/>
    </location>
    <ligand>
        <name>GTP</name>
        <dbReference type="ChEBI" id="CHEBI:37565"/>
    </ligand>
</feature>
<feature type="binding site" evidence="1">
    <location>
        <position position="193"/>
    </location>
    <ligand>
        <name>Mg(2+)</name>
        <dbReference type="ChEBI" id="CHEBI:18420"/>
    </ligand>
</feature>
<feature type="binding site" evidence="1">
    <location>
        <begin position="212"/>
        <end position="215"/>
    </location>
    <ligand>
        <name>GTP</name>
        <dbReference type="ChEBI" id="CHEBI:37565"/>
    </ligand>
</feature>
<feature type="binding site" evidence="1">
    <location>
        <begin position="279"/>
        <end position="282"/>
    </location>
    <ligand>
        <name>GTP</name>
        <dbReference type="ChEBI" id="CHEBI:37565"/>
    </ligand>
</feature>
<feature type="binding site" evidence="1">
    <location>
        <begin position="308"/>
        <end position="310"/>
    </location>
    <ligand>
        <name>GTP</name>
        <dbReference type="ChEBI" id="CHEBI:37565"/>
    </ligand>
</feature>
<comment type="function">
    <text evidence="1">An essential GTPase which binds GTP, GDP and possibly (p)ppGpp with moderate affinity, with high nucleotide exchange rates and a fairly low GTP hydrolysis rate. Plays a role in control of the cell cycle, stress response, ribosome biogenesis and in those bacteria that undergo differentiation, in morphogenesis control.</text>
</comment>
<comment type="cofactor">
    <cofactor evidence="1">
        <name>Mg(2+)</name>
        <dbReference type="ChEBI" id="CHEBI:18420"/>
    </cofactor>
</comment>
<comment type="subunit">
    <text evidence="1">Monomer.</text>
</comment>
<comment type="subcellular location">
    <subcellularLocation>
        <location evidence="1">Cytoplasm</location>
    </subcellularLocation>
</comment>
<comment type="similarity">
    <text evidence="1">Belongs to the TRAFAC class OBG-HflX-like GTPase superfamily. OBG GTPase family.</text>
</comment>
<sequence>MKFLDEAKVYVRSGDGGPGCVSFRREKFIEFGGPNGGDGGRGGDVWIECVQGLNTLIDYRYRQHFKAKKGEHGMGSNCHGAKGDDAVLQVPAGTQVFAEDGETLIADMTEVGQRVRLAKGGNGGFGNAYFTTSTNRAPRHANPGLEGQEMWLILRLKLIADAGLVGLPNAGKSTFLATVTAAKPKIADYPFTTLHPGLGVVRSDEREFVLADIPGLIEGAHEGVGLGDRFLAHVERCRVLLHLVEGTSEHAGKAYKLVRRELEAYGEGLSDKPEIVALSKADALDADTLKQQLARLKRAAGGKPLVLSAASGQGVQEALRAIQAQLDTQGAEEAEAQPAEPWQP</sequence>
<accession>A9VYM4</accession>
<name>OBG_METEP</name>
<organism>
    <name type="scientific">Methylorubrum extorquens (strain PA1)</name>
    <name type="common">Methylobacterium extorquens</name>
    <dbReference type="NCBI Taxonomy" id="419610"/>
    <lineage>
        <taxon>Bacteria</taxon>
        <taxon>Pseudomonadati</taxon>
        <taxon>Pseudomonadota</taxon>
        <taxon>Alphaproteobacteria</taxon>
        <taxon>Hyphomicrobiales</taxon>
        <taxon>Methylobacteriaceae</taxon>
        <taxon>Methylorubrum</taxon>
    </lineage>
</organism>
<protein>
    <recommendedName>
        <fullName evidence="1">GTPase Obg</fullName>
        <ecNumber evidence="1">3.6.5.-</ecNumber>
    </recommendedName>
    <alternativeName>
        <fullName evidence="1">GTP-binding protein Obg</fullName>
    </alternativeName>
</protein>
<gene>
    <name evidence="1" type="primary">obg</name>
    <name type="ordered locus">Mext_4410</name>
</gene>
<evidence type="ECO:0000255" key="1">
    <source>
        <dbReference type="HAMAP-Rule" id="MF_01454"/>
    </source>
</evidence>
<evidence type="ECO:0000255" key="2">
    <source>
        <dbReference type="PROSITE-ProRule" id="PRU01231"/>
    </source>
</evidence>
<dbReference type="EC" id="3.6.5.-" evidence="1"/>
<dbReference type="EMBL" id="CP000908">
    <property type="protein sequence ID" value="ABY32778.1"/>
    <property type="molecule type" value="Genomic_DNA"/>
</dbReference>
<dbReference type="SMR" id="A9VYM4"/>
<dbReference type="KEGG" id="mex:Mext_4410"/>
<dbReference type="eggNOG" id="COG0536">
    <property type="taxonomic scope" value="Bacteria"/>
</dbReference>
<dbReference type="HOGENOM" id="CLU_011747_2_0_5"/>
<dbReference type="BioCyc" id="MEXT419610:MEXT_RS22160-MONOMER"/>
<dbReference type="GO" id="GO:0005737">
    <property type="term" value="C:cytoplasm"/>
    <property type="evidence" value="ECO:0007669"/>
    <property type="project" value="UniProtKB-SubCell"/>
</dbReference>
<dbReference type="GO" id="GO:0005525">
    <property type="term" value="F:GTP binding"/>
    <property type="evidence" value="ECO:0007669"/>
    <property type="project" value="UniProtKB-UniRule"/>
</dbReference>
<dbReference type="GO" id="GO:0003924">
    <property type="term" value="F:GTPase activity"/>
    <property type="evidence" value="ECO:0007669"/>
    <property type="project" value="UniProtKB-UniRule"/>
</dbReference>
<dbReference type="GO" id="GO:0000287">
    <property type="term" value="F:magnesium ion binding"/>
    <property type="evidence" value="ECO:0007669"/>
    <property type="project" value="InterPro"/>
</dbReference>
<dbReference type="GO" id="GO:0042254">
    <property type="term" value="P:ribosome biogenesis"/>
    <property type="evidence" value="ECO:0007669"/>
    <property type="project" value="UniProtKB-UniRule"/>
</dbReference>
<dbReference type="CDD" id="cd01898">
    <property type="entry name" value="Obg"/>
    <property type="match status" value="1"/>
</dbReference>
<dbReference type="FunFam" id="2.70.210.12:FF:000001">
    <property type="entry name" value="GTPase Obg"/>
    <property type="match status" value="1"/>
</dbReference>
<dbReference type="Gene3D" id="2.70.210.12">
    <property type="entry name" value="GTP1/OBG domain"/>
    <property type="match status" value="1"/>
</dbReference>
<dbReference type="Gene3D" id="3.40.50.300">
    <property type="entry name" value="P-loop containing nucleotide triphosphate hydrolases"/>
    <property type="match status" value="1"/>
</dbReference>
<dbReference type="HAMAP" id="MF_01454">
    <property type="entry name" value="GTPase_Obg"/>
    <property type="match status" value="1"/>
</dbReference>
<dbReference type="InterPro" id="IPR031167">
    <property type="entry name" value="G_OBG"/>
</dbReference>
<dbReference type="InterPro" id="IPR006073">
    <property type="entry name" value="GTP-bd"/>
</dbReference>
<dbReference type="InterPro" id="IPR014100">
    <property type="entry name" value="GTP-bd_Obg/CgtA"/>
</dbReference>
<dbReference type="InterPro" id="IPR006074">
    <property type="entry name" value="GTP1-OBG_CS"/>
</dbReference>
<dbReference type="InterPro" id="IPR006169">
    <property type="entry name" value="GTP1_OBG_dom"/>
</dbReference>
<dbReference type="InterPro" id="IPR036726">
    <property type="entry name" value="GTP1_OBG_dom_sf"/>
</dbReference>
<dbReference type="InterPro" id="IPR045086">
    <property type="entry name" value="OBG_GTPase"/>
</dbReference>
<dbReference type="InterPro" id="IPR027417">
    <property type="entry name" value="P-loop_NTPase"/>
</dbReference>
<dbReference type="NCBIfam" id="TIGR02729">
    <property type="entry name" value="Obg_CgtA"/>
    <property type="match status" value="1"/>
</dbReference>
<dbReference type="NCBIfam" id="NF008955">
    <property type="entry name" value="PRK12297.1"/>
    <property type="match status" value="1"/>
</dbReference>
<dbReference type="NCBIfam" id="NF008956">
    <property type="entry name" value="PRK12299.1"/>
    <property type="match status" value="1"/>
</dbReference>
<dbReference type="PANTHER" id="PTHR11702">
    <property type="entry name" value="DEVELOPMENTALLY REGULATED GTP-BINDING PROTEIN-RELATED"/>
    <property type="match status" value="1"/>
</dbReference>
<dbReference type="PANTHER" id="PTHR11702:SF31">
    <property type="entry name" value="MITOCHONDRIAL RIBOSOME-ASSOCIATED GTPASE 2"/>
    <property type="match status" value="1"/>
</dbReference>
<dbReference type="Pfam" id="PF01018">
    <property type="entry name" value="GTP1_OBG"/>
    <property type="match status" value="1"/>
</dbReference>
<dbReference type="Pfam" id="PF01926">
    <property type="entry name" value="MMR_HSR1"/>
    <property type="match status" value="1"/>
</dbReference>
<dbReference type="PIRSF" id="PIRSF002401">
    <property type="entry name" value="GTP_bd_Obg/CgtA"/>
    <property type="match status" value="1"/>
</dbReference>
<dbReference type="PRINTS" id="PR00326">
    <property type="entry name" value="GTP1OBG"/>
</dbReference>
<dbReference type="SUPFAM" id="SSF82051">
    <property type="entry name" value="Obg GTP-binding protein N-terminal domain"/>
    <property type="match status" value="1"/>
</dbReference>
<dbReference type="SUPFAM" id="SSF52540">
    <property type="entry name" value="P-loop containing nucleoside triphosphate hydrolases"/>
    <property type="match status" value="1"/>
</dbReference>
<dbReference type="PROSITE" id="PS51710">
    <property type="entry name" value="G_OBG"/>
    <property type="match status" value="1"/>
</dbReference>
<dbReference type="PROSITE" id="PS00905">
    <property type="entry name" value="GTP1_OBG"/>
    <property type="match status" value="1"/>
</dbReference>
<dbReference type="PROSITE" id="PS51883">
    <property type="entry name" value="OBG"/>
    <property type="match status" value="1"/>
</dbReference>